<organism>
    <name type="scientific">Porphyra purpurea</name>
    <name type="common">Red seaweed</name>
    <name type="synonym">Ulva purpurea</name>
    <dbReference type="NCBI Taxonomy" id="2787"/>
    <lineage>
        <taxon>Eukaryota</taxon>
        <taxon>Rhodophyta</taxon>
        <taxon>Bangiophyceae</taxon>
        <taxon>Bangiales</taxon>
        <taxon>Bangiaceae</taxon>
        <taxon>Porphyra</taxon>
    </lineage>
</organism>
<feature type="chain" id="PRO_0000217389" description="Uncharacterized protein ycf55">
    <location>
        <begin position="1"/>
        <end position="320"/>
    </location>
</feature>
<comment type="subcellular location">
    <subcellularLocation>
        <location>Plastid</location>
        <location>Chloroplast</location>
    </subcellularLocation>
</comment>
<comment type="similarity">
    <text evidence="1">Belongs to the ycf55 family.</text>
</comment>
<sequence>MNNYWPNSQGPILNKEVAELLVRTSVKINKKLTNCSNEVLILDVFRTEVKRNLLKIILAELEKILLEIYTSNLDLSDVTNLTESILIDLFHRSIKRFCRLYELDYNSICQNVHDINYLMYDYKMLLQILIIQLIFGSSSKVKKTFNLFAENIPIKQVEIFLENYLIQLSNIIAHILIQNFETVQETNASYLCNVKFLSDRKLEKLKNNLVWNTLIQNYIERPRAIYESRYKVWVFYQDGLNCQYVYACRSTELYTLSSAQVLVTFLLEIQDFFIPKIKSTVFLIGQFIIYIGQNIFNQIMRTFLEIIRRSSNFKKQSSSL</sequence>
<gene>
    <name type="primary">ycf55</name>
</gene>
<proteinExistence type="inferred from homology"/>
<protein>
    <recommendedName>
        <fullName>Uncharacterized protein ycf55</fullName>
    </recommendedName>
    <alternativeName>
        <fullName>ORF320</fullName>
    </alternativeName>
</protein>
<keyword id="KW-0150">Chloroplast</keyword>
<keyword id="KW-0934">Plastid</keyword>
<name>YCF55_PORPU</name>
<dbReference type="EMBL" id="U38804">
    <property type="protein sequence ID" value="AAC08089.1"/>
    <property type="molecule type" value="Genomic_DNA"/>
</dbReference>
<dbReference type="PIR" id="S73124">
    <property type="entry name" value="S73124"/>
</dbReference>
<dbReference type="SMR" id="P51203"/>
<dbReference type="GO" id="GO:0009507">
    <property type="term" value="C:chloroplast"/>
    <property type="evidence" value="ECO:0007669"/>
    <property type="project" value="UniProtKB-SubCell"/>
</dbReference>
<dbReference type="InterPro" id="IPR017077">
    <property type="entry name" value="Uncharacterised_Ycf55_algae"/>
</dbReference>
<dbReference type="InterPro" id="IPR022552">
    <property type="entry name" value="UPF_Ycf55"/>
</dbReference>
<dbReference type="Pfam" id="PF12452">
    <property type="entry name" value="DUF3685"/>
    <property type="match status" value="1"/>
</dbReference>
<dbReference type="PIRSF" id="PIRSF036962">
    <property type="entry name" value="UCP036962_SignTr_Ycf55"/>
    <property type="match status" value="1"/>
</dbReference>
<evidence type="ECO:0000305" key="1"/>
<geneLocation type="chloroplast"/>
<reference key="1">
    <citation type="journal article" date="1995" name="Plant Mol. Biol. Rep.">
        <title>Complete nucleotide sequence of the Porphyra purpurea chloroplast genome.</title>
        <authorList>
            <person name="Reith M.E."/>
            <person name="Munholland J."/>
        </authorList>
    </citation>
    <scope>NUCLEOTIDE SEQUENCE [LARGE SCALE GENOMIC DNA]</scope>
    <source>
        <strain>Avonport</strain>
    </source>
</reference>
<accession>P51203</accession>